<evidence type="ECO:0000255" key="1">
    <source>
        <dbReference type="HAMAP-Rule" id="MF_00489"/>
    </source>
</evidence>
<name>Y336_STAEQ</name>
<reference key="1">
    <citation type="journal article" date="2005" name="J. Bacteriol.">
        <title>Insights on evolution of virulence and resistance from the complete genome analysis of an early methicillin-resistant Staphylococcus aureus strain and a biofilm-producing methicillin-resistant Staphylococcus epidermidis strain.</title>
        <authorList>
            <person name="Gill S.R."/>
            <person name="Fouts D.E."/>
            <person name="Archer G.L."/>
            <person name="Mongodin E.F."/>
            <person name="DeBoy R.T."/>
            <person name="Ravel J."/>
            <person name="Paulsen I.T."/>
            <person name="Kolonay J.F."/>
            <person name="Brinkac L.M."/>
            <person name="Beanan M.J."/>
            <person name="Dodson R.J."/>
            <person name="Daugherty S.C."/>
            <person name="Madupu R."/>
            <person name="Angiuoli S.V."/>
            <person name="Durkin A.S."/>
            <person name="Haft D.H."/>
            <person name="Vamathevan J.J."/>
            <person name="Khouri H."/>
            <person name="Utterback T.R."/>
            <person name="Lee C."/>
            <person name="Dimitrov G."/>
            <person name="Jiang L."/>
            <person name="Qin H."/>
            <person name="Weidman J."/>
            <person name="Tran K."/>
            <person name="Kang K.H."/>
            <person name="Hance I.R."/>
            <person name="Nelson K.E."/>
            <person name="Fraser C.M."/>
        </authorList>
    </citation>
    <scope>NUCLEOTIDE SEQUENCE [LARGE SCALE GENOMIC DNA]</scope>
    <source>
        <strain>ATCC 35984 / DSM 28319 / BCRC 17069 / CCUG 31568 / BM 3577 / RP62A</strain>
    </source>
</reference>
<gene>
    <name type="ordered locus">SERP0336</name>
</gene>
<proteinExistence type="inferred from homology"/>
<dbReference type="EMBL" id="CP000029">
    <property type="protein sequence ID" value="AAW53714.1"/>
    <property type="molecule type" value="Genomic_DNA"/>
</dbReference>
<dbReference type="RefSeq" id="WP_002438849.1">
    <property type="nucleotide sequence ID" value="NC_002976.3"/>
</dbReference>
<dbReference type="SMR" id="Q5HR57"/>
<dbReference type="STRING" id="176279.SERP0336"/>
<dbReference type="KEGG" id="ser:SERP0336"/>
<dbReference type="eggNOG" id="COG1671">
    <property type="taxonomic scope" value="Bacteria"/>
</dbReference>
<dbReference type="HOGENOM" id="CLU_106619_0_0_9"/>
<dbReference type="Proteomes" id="UP000000531">
    <property type="component" value="Chromosome"/>
</dbReference>
<dbReference type="HAMAP" id="MF_00489">
    <property type="entry name" value="UPF0178"/>
    <property type="match status" value="1"/>
</dbReference>
<dbReference type="InterPro" id="IPR003791">
    <property type="entry name" value="UPF0178"/>
</dbReference>
<dbReference type="NCBIfam" id="NF001095">
    <property type="entry name" value="PRK00124.1"/>
    <property type="match status" value="1"/>
</dbReference>
<dbReference type="PANTHER" id="PTHR35146">
    <property type="entry name" value="UPF0178 PROTEIN YAII"/>
    <property type="match status" value="1"/>
</dbReference>
<dbReference type="PANTHER" id="PTHR35146:SF1">
    <property type="entry name" value="UPF0178 PROTEIN YAII"/>
    <property type="match status" value="1"/>
</dbReference>
<dbReference type="Pfam" id="PF02639">
    <property type="entry name" value="DUF188"/>
    <property type="match status" value="1"/>
</dbReference>
<keyword id="KW-1185">Reference proteome</keyword>
<protein>
    <recommendedName>
        <fullName evidence="1">UPF0178 protein SERP0336</fullName>
    </recommendedName>
</protein>
<accession>Q5HR57</accession>
<organism>
    <name type="scientific">Staphylococcus epidermidis (strain ATCC 35984 / DSM 28319 / BCRC 17069 / CCUG 31568 / BM 3577 / RP62A)</name>
    <dbReference type="NCBI Taxonomy" id="176279"/>
    <lineage>
        <taxon>Bacteria</taxon>
        <taxon>Bacillati</taxon>
        <taxon>Bacillota</taxon>
        <taxon>Bacilli</taxon>
        <taxon>Bacillales</taxon>
        <taxon>Staphylococcaceae</taxon>
        <taxon>Staphylococcus</taxon>
    </lineage>
</organism>
<sequence length="149" mass="16917">MKTNVIIDGDACPVVNSVIELTKGTGIFVTILRSFSHFSQQIQPEHVKIVYVDDGPDAVDYKIVELASNNDIVITQDYGLASLLIDKVHTVMHHKGNIYHSNNIQSLLNQRYLNAQIRRRGGRHKGPPPFTTEDRLKFEHAFRKIINQI</sequence>
<feature type="chain" id="PRO_0000176015" description="UPF0178 protein SERP0336">
    <location>
        <begin position="1"/>
        <end position="149"/>
    </location>
</feature>
<comment type="similarity">
    <text evidence="1">Belongs to the UPF0178 family.</text>
</comment>